<reference key="1">
    <citation type="journal article" date="2002" name="Lancet">
        <title>Genome and virulence determinants of high virulence community-acquired MRSA.</title>
        <authorList>
            <person name="Baba T."/>
            <person name="Takeuchi F."/>
            <person name="Kuroda M."/>
            <person name="Yuzawa H."/>
            <person name="Aoki K."/>
            <person name="Oguchi A."/>
            <person name="Nagai Y."/>
            <person name="Iwama N."/>
            <person name="Asano K."/>
            <person name="Naimi T."/>
            <person name="Kuroda H."/>
            <person name="Cui L."/>
            <person name="Yamamoto K."/>
            <person name="Hiramatsu K."/>
        </authorList>
    </citation>
    <scope>NUCLEOTIDE SEQUENCE [LARGE SCALE GENOMIC DNA]</scope>
    <source>
        <strain>MW2</strain>
    </source>
</reference>
<sequence>MSKSNQKIASIEQLSNNEGIISALAFDQRGALKRMMAKHQTEEPTVAQIEQLKVLVAEELTQYASSILLDPEYGLPASDARNKDCGLLLAYEKTGYDVNAKGRLPDCLVQWSAKRLKEQGANAVKFLLYYDVDDAEEINIQKKAYIERIGSECVAEDIPFFLEVLTYDDNIPDNGSVEFAKVKPRKVNEAMKLFSEPRFNVDVLKVEVPVNMKYVEGFAEGEVVYTKEEAAQHFKNQDAATHLPYIYLSAGVSAELFQETLKFAHEAGAKFNGVLCGRATWSGAVQVYIEQGEDAAREWLRTTGFKNIDDLNKVLKDTATSWKQRK</sequence>
<evidence type="ECO:0000255" key="1">
    <source>
        <dbReference type="HAMAP-Rule" id="MF_00734"/>
    </source>
</evidence>
<keyword id="KW-0423">Lactose metabolism</keyword>
<keyword id="KW-0456">Lyase</keyword>
<protein>
    <recommendedName>
        <fullName evidence="1">Tagatose 1,6-diphosphate aldolase</fullName>
        <ecNumber evidence="1">4.1.2.40</ecNumber>
    </recommendedName>
    <alternativeName>
        <fullName evidence="1">D-tagatose-1,6-bisphosphate aldolase</fullName>
    </alternativeName>
    <alternativeName>
        <fullName evidence="1">Tagatose-bisphosphate aldolase</fullName>
    </alternativeName>
</protein>
<name>LACD_STAAW</name>
<feature type="chain" id="PRO_0000203950" description="Tagatose 1,6-diphosphate aldolase">
    <location>
        <begin position="1"/>
        <end position="326"/>
    </location>
</feature>
<gene>
    <name evidence="1" type="primary">lacD</name>
    <name type="ordered locus">MW2118</name>
</gene>
<accession>Q8NVC9</accession>
<dbReference type="EC" id="4.1.2.40" evidence="1"/>
<dbReference type="EMBL" id="BA000033">
    <property type="protein sequence ID" value="BAB95983.1"/>
    <property type="molecule type" value="Genomic_DNA"/>
</dbReference>
<dbReference type="RefSeq" id="WP_000047025.1">
    <property type="nucleotide sequence ID" value="NC_003923.1"/>
</dbReference>
<dbReference type="SMR" id="Q8NVC9"/>
<dbReference type="KEGG" id="sam:MW2118"/>
<dbReference type="HOGENOM" id="CLU_058971_0_1_9"/>
<dbReference type="UniPathway" id="UPA00704">
    <property type="reaction ID" value="UER00716"/>
</dbReference>
<dbReference type="GO" id="GO:0061595">
    <property type="term" value="F:6-deoxy-6-sulfofructose-1-phosphate aldolase activity"/>
    <property type="evidence" value="ECO:0007669"/>
    <property type="project" value="TreeGrafter"/>
</dbReference>
<dbReference type="GO" id="GO:0009024">
    <property type="term" value="F:tagatose-6-phosphate kinase activity"/>
    <property type="evidence" value="ECO:0007669"/>
    <property type="project" value="InterPro"/>
</dbReference>
<dbReference type="GO" id="GO:0009025">
    <property type="term" value="F:tagatose-bisphosphate aldolase activity"/>
    <property type="evidence" value="ECO:0007669"/>
    <property type="project" value="UniProtKB-UniRule"/>
</dbReference>
<dbReference type="GO" id="GO:1902777">
    <property type="term" value="P:6-sulfoquinovose(1-) catabolic process"/>
    <property type="evidence" value="ECO:0007669"/>
    <property type="project" value="TreeGrafter"/>
</dbReference>
<dbReference type="GO" id="GO:2001059">
    <property type="term" value="P:D-tagatose 6-phosphate catabolic process"/>
    <property type="evidence" value="ECO:0007669"/>
    <property type="project" value="UniProtKB-UniRule"/>
</dbReference>
<dbReference type="GO" id="GO:0019512">
    <property type="term" value="P:lactose catabolic process via tagatose-6-phosphate"/>
    <property type="evidence" value="ECO:0007669"/>
    <property type="project" value="InterPro"/>
</dbReference>
<dbReference type="FunFam" id="3.20.20.70:FF:000137">
    <property type="entry name" value="Tagatose 1,6-diphosphate aldolase 2"/>
    <property type="match status" value="1"/>
</dbReference>
<dbReference type="Gene3D" id="3.20.20.70">
    <property type="entry name" value="Aldolase class I"/>
    <property type="match status" value="1"/>
</dbReference>
<dbReference type="HAMAP" id="MF_00734">
    <property type="entry name" value="LacD"/>
    <property type="match status" value="1"/>
</dbReference>
<dbReference type="InterPro" id="IPR013785">
    <property type="entry name" value="Aldolase_TIM"/>
</dbReference>
<dbReference type="InterPro" id="IPR002915">
    <property type="entry name" value="DeoC/FbaB/LacD_aldolase"/>
</dbReference>
<dbReference type="InterPro" id="IPR050552">
    <property type="entry name" value="LacD_aldolase"/>
</dbReference>
<dbReference type="InterPro" id="IPR005927">
    <property type="entry name" value="Tag_1.6-dipho_adolase"/>
</dbReference>
<dbReference type="NCBIfam" id="TIGR01232">
    <property type="entry name" value="lacD"/>
    <property type="match status" value="1"/>
</dbReference>
<dbReference type="NCBIfam" id="NF003180">
    <property type="entry name" value="PRK04161.1"/>
    <property type="match status" value="1"/>
</dbReference>
<dbReference type="NCBIfam" id="NF009065">
    <property type="entry name" value="PRK12399.1"/>
    <property type="match status" value="1"/>
</dbReference>
<dbReference type="NCBIfam" id="NF009498">
    <property type="entry name" value="PRK12858.1"/>
    <property type="match status" value="1"/>
</dbReference>
<dbReference type="PANTHER" id="PTHR39340">
    <property type="entry name" value="SULFOFRUCTOSEPHOSPHATE ALDOLASE"/>
    <property type="match status" value="1"/>
</dbReference>
<dbReference type="PANTHER" id="PTHR39340:SF1">
    <property type="entry name" value="SULFOFRUCTOSEPHOSPHATE ALDOLASE"/>
    <property type="match status" value="1"/>
</dbReference>
<dbReference type="Pfam" id="PF01791">
    <property type="entry name" value="DeoC"/>
    <property type="match status" value="1"/>
</dbReference>
<dbReference type="SMART" id="SM01133">
    <property type="entry name" value="DeoC"/>
    <property type="match status" value="1"/>
</dbReference>
<dbReference type="SUPFAM" id="SSF51569">
    <property type="entry name" value="Aldolase"/>
    <property type="match status" value="1"/>
</dbReference>
<proteinExistence type="inferred from homology"/>
<comment type="catalytic activity">
    <reaction evidence="1">
        <text>D-tagatofuranose 1,6-bisphosphate = D-glyceraldehyde 3-phosphate + dihydroxyacetone phosphate</text>
        <dbReference type="Rhea" id="RHEA:22948"/>
        <dbReference type="ChEBI" id="CHEBI:57642"/>
        <dbReference type="ChEBI" id="CHEBI:58694"/>
        <dbReference type="ChEBI" id="CHEBI:59776"/>
        <dbReference type="EC" id="4.1.2.40"/>
    </reaction>
</comment>
<comment type="pathway">
    <text evidence="1">Carbohydrate metabolism; D-tagatose 6-phosphate degradation; D-glyceraldehyde 3-phosphate and glycerone phosphate from D-tagatose 6-phosphate: step 2/2.</text>
</comment>
<comment type="similarity">
    <text evidence="1">Belongs to the aldolase LacD family.</text>
</comment>
<organism>
    <name type="scientific">Staphylococcus aureus (strain MW2)</name>
    <dbReference type="NCBI Taxonomy" id="196620"/>
    <lineage>
        <taxon>Bacteria</taxon>
        <taxon>Bacillati</taxon>
        <taxon>Bacillota</taxon>
        <taxon>Bacilli</taxon>
        <taxon>Bacillales</taxon>
        <taxon>Staphylococcaceae</taxon>
        <taxon>Staphylococcus</taxon>
    </lineage>
</organism>